<feature type="chain" id="PRO_0000392396" description="Fe-S cluster assembly protein DRE2">
    <location>
        <begin position="1"/>
        <end position="366"/>
    </location>
</feature>
<feature type="region of interest" description="N-terminal SAM-like domain" evidence="1">
    <location>
        <begin position="8"/>
        <end position="167"/>
    </location>
</feature>
<feature type="region of interest" description="Disordered" evidence="2">
    <location>
        <begin position="100"/>
        <end position="136"/>
    </location>
</feature>
<feature type="region of interest" description="Linker" evidence="1">
    <location>
        <begin position="168"/>
        <end position="258"/>
    </location>
</feature>
<feature type="region of interest" description="Fe-S binding site A" evidence="1">
    <location>
        <begin position="268"/>
        <end position="284"/>
    </location>
</feature>
<feature type="region of interest" description="Fe-S binding site B" evidence="1">
    <location>
        <begin position="329"/>
        <end position="343"/>
    </location>
</feature>
<feature type="short sequence motif" description="Cx2C motif 1" evidence="1">
    <location>
        <begin position="329"/>
        <end position="332"/>
    </location>
</feature>
<feature type="short sequence motif" description="Cx2C motif 2" evidence="1">
    <location>
        <begin position="340"/>
        <end position="343"/>
    </location>
</feature>
<feature type="compositionally biased region" description="Low complexity" evidence="2">
    <location>
        <begin position="108"/>
        <end position="118"/>
    </location>
</feature>
<feature type="compositionally biased region" description="Gly residues" evidence="2">
    <location>
        <begin position="119"/>
        <end position="128"/>
    </location>
</feature>
<feature type="binding site" evidence="1">
    <location>
        <position position="268"/>
    </location>
    <ligand>
        <name>[2Fe-2S] cluster</name>
        <dbReference type="ChEBI" id="CHEBI:190135"/>
    </ligand>
</feature>
<feature type="binding site" evidence="1">
    <location>
        <position position="279"/>
    </location>
    <ligand>
        <name>[2Fe-2S] cluster</name>
        <dbReference type="ChEBI" id="CHEBI:190135"/>
    </ligand>
</feature>
<feature type="binding site" evidence="1">
    <location>
        <position position="282"/>
    </location>
    <ligand>
        <name>[2Fe-2S] cluster</name>
        <dbReference type="ChEBI" id="CHEBI:190135"/>
    </ligand>
</feature>
<feature type="binding site" evidence="1">
    <location>
        <position position="284"/>
    </location>
    <ligand>
        <name>[2Fe-2S] cluster</name>
        <dbReference type="ChEBI" id="CHEBI:190135"/>
    </ligand>
</feature>
<feature type="binding site" evidence="1">
    <location>
        <position position="329"/>
    </location>
    <ligand>
        <name>[4Fe-4S] cluster</name>
        <dbReference type="ChEBI" id="CHEBI:49883"/>
    </ligand>
</feature>
<feature type="binding site" evidence="1">
    <location>
        <position position="332"/>
    </location>
    <ligand>
        <name>[4Fe-4S] cluster</name>
        <dbReference type="ChEBI" id="CHEBI:49883"/>
    </ligand>
</feature>
<feature type="binding site" evidence="1">
    <location>
        <position position="340"/>
    </location>
    <ligand>
        <name>[4Fe-4S] cluster</name>
        <dbReference type="ChEBI" id="CHEBI:49883"/>
    </ligand>
</feature>
<feature type="binding site" evidence="1">
    <location>
        <position position="343"/>
    </location>
    <ligand>
        <name>[4Fe-4S] cluster</name>
        <dbReference type="ChEBI" id="CHEBI:49883"/>
    </ligand>
</feature>
<accession>C1GP53</accession>
<dbReference type="EMBL" id="KN293992">
    <property type="protein sequence ID" value="EEH35975.1"/>
    <property type="molecule type" value="Genomic_DNA"/>
</dbReference>
<dbReference type="RefSeq" id="XP_002797759.1">
    <property type="nucleotide sequence ID" value="XM_002797713.2"/>
</dbReference>
<dbReference type="STRING" id="502779.C1GP53"/>
<dbReference type="GeneID" id="9100844"/>
<dbReference type="KEGG" id="pbl:PAAG_00298"/>
<dbReference type="VEuPathDB" id="FungiDB:PAAG_00298"/>
<dbReference type="eggNOG" id="KOG4020">
    <property type="taxonomic scope" value="Eukaryota"/>
</dbReference>
<dbReference type="HOGENOM" id="CLU_067152_1_0_1"/>
<dbReference type="OMA" id="DFVMPVT"/>
<dbReference type="OrthoDB" id="311633at2759"/>
<dbReference type="Proteomes" id="UP000002059">
    <property type="component" value="Partially assembled WGS sequence"/>
</dbReference>
<dbReference type="GO" id="GO:0005758">
    <property type="term" value="C:mitochondrial intermembrane space"/>
    <property type="evidence" value="ECO:0007669"/>
    <property type="project" value="UniProtKB-SubCell"/>
</dbReference>
<dbReference type="GO" id="GO:0051537">
    <property type="term" value="F:2 iron, 2 sulfur cluster binding"/>
    <property type="evidence" value="ECO:0007669"/>
    <property type="project" value="UniProtKB-UniRule"/>
</dbReference>
<dbReference type="GO" id="GO:0051539">
    <property type="term" value="F:4 iron, 4 sulfur cluster binding"/>
    <property type="evidence" value="ECO:0007669"/>
    <property type="project" value="UniProtKB-KW"/>
</dbReference>
<dbReference type="GO" id="GO:0009055">
    <property type="term" value="F:electron transfer activity"/>
    <property type="evidence" value="ECO:0007669"/>
    <property type="project" value="UniProtKB-UniRule"/>
</dbReference>
<dbReference type="GO" id="GO:0046872">
    <property type="term" value="F:metal ion binding"/>
    <property type="evidence" value="ECO:0007669"/>
    <property type="project" value="UniProtKB-KW"/>
</dbReference>
<dbReference type="GO" id="GO:0016226">
    <property type="term" value="P:iron-sulfur cluster assembly"/>
    <property type="evidence" value="ECO:0007669"/>
    <property type="project" value="UniProtKB-UniRule"/>
</dbReference>
<dbReference type="Gene3D" id="3.40.50.11000">
    <property type="entry name" value="Fe-S cluster assembly protein Dre2, N-terminal domain"/>
    <property type="match status" value="1"/>
</dbReference>
<dbReference type="HAMAP" id="MF_03115">
    <property type="entry name" value="Anamorsin"/>
    <property type="match status" value="1"/>
</dbReference>
<dbReference type="InterPro" id="IPR007785">
    <property type="entry name" value="Anamorsin"/>
</dbReference>
<dbReference type="InterPro" id="IPR046408">
    <property type="entry name" value="CIAPIN1"/>
</dbReference>
<dbReference type="InterPro" id="IPR031838">
    <property type="entry name" value="Dre2_N"/>
</dbReference>
<dbReference type="PANTHER" id="PTHR13273">
    <property type="entry name" value="ANAMORSIN"/>
    <property type="match status" value="1"/>
</dbReference>
<dbReference type="PANTHER" id="PTHR13273:SF14">
    <property type="entry name" value="ANAMORSIN"/>
    <property type="match status" value="1"/>
</dbReference>
<dbReference type="Pfam" id="PF05093">
    <property type="entry name" value="CIAPIN1"/>
    <property type="match status" value="1"/>
</dbReference>
<dbReference type="Pfam" id="PF16803">
    <property type="entry name" value="DRE2_N"/>
    <property type="match status" value="1"/>
</dbReference>
<organism>
    <name type="scientific">Paracoccidioides lutzii (strain ATCC MYA-826 / Pb01)</name>
    <name type="common">Paracoccidioides brasiliensis</name>
    <dbReference type="NCBI Taxonomy" id="502779"/>
    <lineage>
        <taxon>Eukaryota</taxon>
        <taxon>Fungi</taxon>
        <taxon>Dikarya</taxon>
        <taxon>Ascomycota</taxon>
        <taxon>Pezizomycotina</taxon>
        <taxon>Eurotiomycetes</taxon>
        <taxon>Eurotiomycetidae</taxon>
        <taxon>Onygenales</taxon>
        <taxon>Ajellomycetaceae</taxon>
        <taxon>Paracoccidioides</taxon>
    </lineage>
</organism>
<keyword id="KW-0001">2Fe-2S</keyword>
<keyword id="KW-0004">4Fe-4S</keyword>
<keyword id="KW-0963">Cytoplasm</keyword>
<keyword id="KW-0408">Iron</keyword>
<keyword id="KW-0411">Iron-sulfur</keyword>
<keyword id="KW-0479">Metal-binding</keyword>
<keyword id="KW-0496">Mitochondrion</keyword>
<keyword id="KW-1185">Reference proteome</keyword>
<evidence type="ECO:0000255" key="1">
    <source>
        <dbReference type="HAMAP-Rule" id="MF_03115"/>
    </source>
</evidence>
<evidence type="ECO:0000256" key="2">
    <source>
        <dbReference type="SAM" id="MobiDB-lite"/>
    </source>
</evidence>
<name>DRE2_PARBA</name>
<sequence length="366" mass="38624">MLPSQTPAQGSGRFLLLSPPSLSSHPEKLNAILGLHARESTDLQMLDRLALGLVSLPQSTYDVVLLLTGADNTLAETYRLVSRGVLQGVVNSLKPGGKLRNRDNQIWGSGSDSAAGLGSSDGGGGGGGGEKKSSSEQAFRNEAILAGLVFDDRGELAKPDFGAQQAVPLKLGRKKNLGDSAFGNGTVELPASNGVRVTAGATTTTPTTTTTTTINSSTPSGVRFIDFSDDFGVPMVEETQELDEELIDEEELLGEFDMGRPIVQPPECRPKAGKRRRACKDCTCGLSQKLEAEDRAKRANADKALETLKLGTNDLAEVDFTVQGKVGSCGNCALGDAFRCDGCPYIGLPAFKPGEEVRLLNNDVQL</sequence>
<protein>
    <recommendedName>
        <fullName evidence="1">Fe-S cluster assembly protein DRE2</fullName>
    </recommendedName>
    <alternativeName>
        <fullName evidence="1">Anamorsin homolog</fullName>
    </alternativeName>
</protein>
<comment type="function">
    <text evidence="1">Component of the cytosolic iron-sulfur (Fe-S) protein assembly (CIA) machinery required for the maturation of extramitochondrial Fe-S proteins. Part of an electron transfer chain functioning in an early step of cytosolic Fe-S biogenesis, facilitating the de novo assembly of a [4Fe-4S] cluster on the scaffold complex CFD1-NBP35. Electrons are transferred to DRE2 from NADPH via the FAD- and FMN-containing protein TAH18. TAH18-DRE2 are also required for the assembly of the diferric tyrosyl radical cofactor of ribonucleotide reductase (RNR), probably by providing electrons for reduction during radical cofactor maturation in the catalytic small subunit RNR2.</text>
</comment>
<comment type="cofactor">
    <cofactor evidence="1">
        <name>[2Fe-2S] cluster</name>
        <dbReference type="ChEBI" id="CHEBI:190135"/>
    </cofactor>
</comment>
<comment type="cofactor">
    <cofactor evidence="1">
        <name>[4Fe-4S] cluster</name>
        <dbReference type="ChEBI" id="CHEBI:49883"/>
    </cofactor>
</comment>
<comment type="subunit">
    <text evidence="1">Monomer. Interacts with TAH18. Interacts with MIA40.</text>
</comment>
<comment type="subcellular location">
    <subcellularLocation>
        <location evidence="1">Cytoplasm</location>
    </subcellularLocation>
    <subcellularLocation>
        <location evidence="1">Mitochondrion intermembrane space</location>
    </subcellularLocation>
</comment>
<comment type="domain">
    <text evidence="1">The C-terminal domain binds 2 Fe-S clusters but is otherwise mostly in an intrinsically disordered conformation.</text>
</comment>
<comment type="domain">
    <text evidence="1">The N-terminal domain has structural similarity with S-adenosyl-L-methionine-dependent methyltransferases, but does not bind S-adenosyl-L-methionine. It is required for correct assembly of the 2 Fe-S clusters.</text>
</comment>
<comment type="domain">
    <text evidence="1">The twin Cx2C motifs are involved in the recognition by the mitochondrial MIA40-ERV1 disulfide relay system. The formation of 2 disulfide bonds in the Cx2C motifs through dithiol/disulfide exchange reactions effectively traps the protein in the mitochondrial intermembrane space.</text>
</comment>
<comment type="similarity">
    <text evidence="1">Belongs to the anamorsin family.</text>
</comment>
<gene>
    <name evidence="1" type="primary">DRE2</name>
    <name type="ORF">PAAG_00298</name>
</gene>
<proteinExistence type="inferred from homology"/>
<reference key="1">
    <citation type="journal article" date="2011" name="PLoS Genet.">
        <title>Comparative genomic analysis of human fungal pathogens causing paracoccidioidomycosis.</title>
        <authorList>
            <person name="Desjardins C.A."/>
            <person name="Champion M.D."/>
            <person name="Holder J.W."/>
            <person name="Muszewska A."/>
            <person name="Goldberg J."/>
            <person name="Bailao A.M."/>
            <person name="Brigido M.M."/>
            <person name="Ferreira M.E."/>
            <person name="Garcia A.M."/>
            <person name="Grynberg M."/>
            <person name="Gujja S."/>
            <person name="Heiman D.I."/>
            <person name="Henn M.R."/>
            <person name="Kodira C.D."/>
            <person name="Leon-Narvaez H."/>
            <person name="Longo L.V.G."/>
            <person name="Ma L.-J."/>
            <person name="Malavazi I."/>
            <person name="Matsuo A.L."/>
            <person name="Morais F.V."/>
            <person name="Pereira M."/>
            <person name="Rodriguez-Brito S."/>
            <person name="Sakthikumar S."/>
            <person name="Salem-Izacc S.M."/>
            <person name="Sykes S.M."/>
            <person name="Teixeira M.M."/>
            <person name="Vallejo M.C."/>
            <person name="Walter M.E."/>
            <person name="Yandava C."/>
            <person name="Young S."/>
            <person name="Zeng Q."/>
            <person name="Zucker J."/>
            <person name="Felipe M.S."/>
            <person name="Goldman G.H."/>
            <person name="Haas B.J."/>
            <person name="McEwen J.G."/>
            <person name="Nino-Vega G."/>
            <person name="Puccia R."/>
            <person name="San-Blas G."/>
            <person name="Soares C.M."/>
            <person name="Birren B.W."/>
            <person name="Cuomo C.A."/>
        </authorList>
    </citation>
    <scope>NUCLEOTIDE SEQUENCE [LARGE SCALE GENOMIC DNA]</scope>
    <source>
        <strain>ATCC MYA-826 / Pb01</strain>
    </source>
</reference>